<accession>F9X2Z5</accession>
<comment type="function">
    <text evidence="12">Polymerizes chitin, a structural polymer of the cell wall and septum, by transferring the sugar moiety of UDP-GlcNAc to the non-reducing end of the growing chitin polymer.</text>
</comment>
<comment type="catalytic activity">
    <reaction evidence="12">
        <text>[(1-&gt;4)-N-acetyl-beta-D-glucosaminyl](n) + UDP-N-acetyl-alpha-D-glucosamine = [(1-&gt;4)-N-acetyl-beta-D-glucosaminyl](n+1) + UDP + H(+)</text>
        <dbReference type="Rhea" id="RHEA:16637"/>
        <dbReference type="Rhea" id="RHEA-COMP:9593"/>
        <dbReference type="Rhea" id="RHEA-COMP:9595"/>
        <dbReference type="ChEBI" id="CHEBI:15378"/>
        <dbReference type="ChEBI" id="CHEBI:17029"/>
        <dbReference type="ChEBI" id="CHEBI:57705"/>
        <dbReference type="ChEBI" id="CHEBI:58223"/>
        <dbReference type="EC" id="2.4.1.16"/>
    </reaction>
    <physiologicalReaction direction="left-to-right" evidence="12">
        <dbReference type="Rhea" id="RHEA:16638"/>
    </physiologicalReaction>
</comment>
<comment type="subcellular location">
    <subcellularLocation>
        <location evidence="8">Apical cell membrane</location>
        <topology evidence="2">Multi-pass membrane protein</topology>
    </subcellularLocation>
    <subcellularLocation>
        <location evidence="1">Cell septum</location>
    </subcellularLocation>
    <subcellularLocation>
        <location evidence="1">Cell tip</location>
    </subcellularLocation>
    <text evidence="8">Localized at the apical plasma membrane, but is not concentrated in the Spitzenkoerper (PubMed:31672687). Delivery involves transport along microtubules (PubMed:31672687).</text>
</comment>
<comment type="domain">
    <text evidence="1">The N-terminal myosin motor-like domain (MMD) does not seem to have motor activity but is indispensable for polarized cell wall synthesis via binding to actin that ensures the proper localization to the hyphal tips and septation sites near actin structures.</text>
</comment>
<comment type="similarity">
    <text evidence="11">In the N-terminal section; belongs to the TRAFAC class myosin-kinesin ATPase superfamily. Myosin family.</text>
</comment>
<comment type="similarity">
    <text evidence="11">In the C-terminal section; belongs to the chitin synthase family. Class V subfamily.</text>
</comment>
<proteinExistence type="inferred from homology"/>
<name>CHS5_ZYMTI</name>
<feature type="chain" id="PRO_0000460859" description="Chitin synthase 5">
    <location>
        <begin position="1"/>
        <end position="1855"/>
    </location>
</feature>
<feature type="transmembrane region" description="Helical" evidence="2">
    <location>
        <begin position="887"/>
        <end position="907"/>
    </location>
</feature>
<feature type="transmembrane region" description="Helical" evidence="2">
    <location>
        <begin position="922"/>
        <end position="942"/>
    </location>
</feature>
<feature type="transmembrane region" description="Helical" evidence="2">
    <location>
        <begin position="1199"/>
        <end position="1219"/>
    </location>
</feature>
<feature type="transmembrane region" description="Helical" evidence="2">
    <location>
        <begin position="1587"/>
        <end position="1607"/>
    </location>
</feature>
<feature type="transmembrane region" description="Helical" evidence="2">
    <location>
        <begin position="1621"/>
        <end position="1641"/>
    </location>
</feature>
<feature type="transmembrane region" description="Helical" evidence="2">
    <location>
        <begin position="1650"/>
        <end position="1670"/>
    </location>
</feature>
<feature type="domain" description="Myosin motor" evidence="5">
    <location>
        <begin position="1"/>
        <end position="778"/>
    </location>
</feature>
<feature type="domain" description="Cytochrome b5 heme-binding" evidence="3">
    <location>
        <begin position="950"/>
        <end position="1008"/>
    </location>
</feature>
<feature type="domain" description="DEK-C" evidence="6">
    <location>
        <begin position="1797"/>
        <end position="1852"/>
    </location>
</feature>
<feature type="region of interest" description="Disordered" evidence="7">
    <location>
        <begin position="585"/>
        <end position="650"/>
    </location>
</feature>
<feature type="region of interest" description="Actin-binding" evidence="5">
    <location>
        <begin position="658"/>
        <end position="682"/>
    </location>
</feature>
<feature type="binding site" evidence="5">
    <location>
        <begin position="95"/>
        <end position="102"/>
    </location>
    <ligand>
        <name>ATP</name>
        <dbReference type="ChEBI" id="CHEBI:30616"/>
    </ligand>
</feature>
<feature type="glycosylation site" description="N-linked (GlcNAc...) asparagine" evidence="4">
    <location>
        <position position="221"/>
    </location>
</feature>
<feature type="glycosylation site" description="N-linked (GlcNAc...) asparagine" evidence="4">
    <location>
        <position position="520"/>
    </location>
</feature>
<feature type="glycosylation site" description="N-linked (GlcNAc...) asparagine" evidence="4">
    <location>
        <position position="558"/>
    </location>
</feature>
<feature type="glycosylation site" description="N-linked (GlcNAc...) asparagine" evidence="4">
    <location>
        <position position="662"/>
    </location>
</feature>
<feature type="glycosylation site" description="N-linked (GlcNAc...) asparagine" evidence="4">
    <location>
        <position position="1037"/>
    </location>
</feature>
<feature type="glycosylation site" description="N-linked (GlcNAc...) asparagine" evidence="4">
    <location>
        <position position="1061"/>
    </location>
</feature>
<feature type="glycosylation site" description="N-linked (GlcNAc...) asparagine" evidence="4">
    <location>
        <position position="1422"/>
    </location>
</feature>
<feature type="glycosylation site" description="N-linked (GlcNAc...) asparagine" evidence="4">
    <location>
        <position position="1456"/>
    </location>
</feature>
<feature type="glycosylation site" description="N-linked (GlcNAc...) asparagine" evidence="4">
    <location>
        <position position="1562"/>
    </location>
</feature>
<feature type="glycosylation site" description="N-linked (GlcNAc...) asparagine" evidence="4">
    <location>
        <position position="1755"/>
    </location>
</feature>
<feature type="glycosylation site" description="N-linked (GlcNAc...) asparagine" evidence="4">
    <location>
        <position position="1767"/>
    </location>
</feature>
<sequence>MSSAPTTQQNLAALPAPAMSDTGITSHIASRYHSHLPISTLSTQGYIAVNTYTNSAKGPNGGKDGSAMGAAEELASRMWARLGHRQENQAAIFLGESGTGKTTIRSHLLSSLLQYSSTPLSKKLSFAAFVFDSLTTTKSVTAPTASKAGLFFELQYDTGSSLHPTLIGGKVLDHRLERSRVATVPPGERNFHVLYYLLAGTSDDEKEHLGLNTGITAGTGNRSSLGTQKRWRYLGHPSQLKVGINDAEGFQHFKTALRNLEFPREEIAHMCEILAAILHIGQLEFMTSQSTTPAPDESGGYGHEGGEEITVVKNKDVLSMIAAFLGVGDRTLEQSLGYRTKMLRRERVTIMLDPKGARENADELARTLYSLLVALVMEKINQKTCAVEEAVANTISVVDFPGFADTSSTGSVLDQLLNNAATECLYNFCLQSFFERKAELLETEEVQVPLTSYFDNSDAVKGLLKPGNGLLSILDDQMRRGKTDLQLADSLRKRFEGKNPAIEVTSGTVQLPGANFATQNTSQIFTVKHFAGEVKYPVDGLLEENGEVISGDLMNLVNSSSSPFVAELFGQEALNKVVHPDDRNAVQQASVASKPSRMPSMARRRGGKAGRFGSRRGGDIDEEKDSDEGRARSVSRHRHNPKSADTQQGASAQFLSSLDNINKSLTAPNTNPYFFFCLKPNDRRIANQFDSKCVRQQIQTLGIAELSQRLKNADFSIFMPFGEFLGSAEGEVSVVGSEREKAEMILDEKSWPKNEARVGSTGVFLSERCWRQIVRAGDLGVVPMPPSDENPFNNPESLTPMDGKRGFGESKVHLLQTPGSAIYSDDKAAGYFGSRDMDAKSDAGASALREGDMFRNLETREELAEKGNEVTTTPIEERPKSASRVRWLVLVYVLTWWCPDWAIRIIGRMPRQDIRMAWREKVAINFIIWLSCAFVVFFMVGFPRIICPTQHVFSPSELTSYDGKNSDAYVAIRGNVFDLGAFIPQHYPSIVPASALEKYAGTDATNLFPVQVSAMCQGTDPDGTIDAAVQLNYQNRNYTGQNLISTTDNNAQYHDFRWATNDSRPAWFTEQMIFLRGHYWKGSVGYSPQYLKTLAKKSNQVAYINNRVYDFTDYIAGGRAPQYPPGEERPDTLPDSNFMDSRVVDLFSQRSGEDVTKYWDALNIDTGLRDRMQICLDNLFYVGQLDTRDSPKCQFAKYILLAVSIMLVSVICFKFLAALQFGKKNIPENLDKFIICTVPAYTEDEDSLRRALDSAARTRYDDKRKLLFVICDGMIIGQGNDRPTPRIVLDILGVPETVDPEPLSFESLGEGQKQHNMGKVYSGLYEVQGHIVPFIVVVKVGKPSEVSRPGNRGKRDSQMILMRFLNRVHYNLAMTPLELELHHQIRNVIGVNPTFYEFLLQIDADTVVAPDSCTRFVSAMINDTKIIAVCGETALTNAKASFITMMQVYEYYISHNLTKAFESLFGSVTCLPGCFTMYRIRAAETGKPLFVSREIVNDYSETRVDTLHMKNLLHLGEDRFLTTLLMKYHSKYKTKYIMRAHAWTIAPDSWAVFMSQRRRWINSTVHNLIEVIPLQQLCGFCCFSMRFVVFLDLLSTIVQPVIVGYIVYLIVQVATNPASTATTAFILIAAIYGLQAIIFIVRRKWEMVGWMIIYILATPIFSFCLPLIAFWNMDDFSWGNTRMVTGEKGKQILVSDEGKFNPDDIPRKKWEEYQAELWDAQTRDDAQSEMSGISYGTKSWHPAASEYGYAMSQHNMSTLSVPHMPHNGSRMSLLTSDNGMGMQQRDYSASDIDMSDMPNDDAILAEIREILATADLMTVTKKSIKAELERRFGVPMDSRRQYIGSATEAILSGQL</sequence>
<organism>
    <name type="scientific">Zymoseptoria tritici (strain CBS 115943 / IPO323)</name>
    <name type="common">Speckled leaf blotch fungus</name>
    <name type="synonym">Septoria tritici</name>
    <dbReference type="NCBI Taxonomy" id="336722"/>
    <lineage>
        <taxon>Eukaryota</taxon>
        <taxon>Fungi</taxon>
        <taxon>Dikarya</taxon>
        <taxon>Ascomycota</taxon>
        <taxon>Pezizomycotina</taxon>
        <taxon>Dothideomycetes</taxon>
        <taxon>Dothideomycetidae</taxon>
        <taxon>Mycosphaerellales</taxon>
        <taxon>Mycosphaerellaceae</taxon>
        <taxon>Zymoseptoria</taxon>
    </lineage>
</organism>
<protein>
    <recommendedName>
        <fullName evidence="10">Chitin synthase 5</fullName>
        <ecNumber evidence="12">2.4.1.16</ecNumber>
    </recommendedName>
    <alternativeName>
        <fullName evidence="11">Chitin-UDP acetyl-glucosaminyl transferase 5</fullName>
    </alternativeName>
    <alternativeName>
        <fullName evidence="10">Class-V chitin synthase 5</fullName>
    </alternativeName>
    <alternativeName>
        <fullName evidence="9">Myosin-chitin synthase 1</fullName>
    </alternativeName>
</protein>
<dbReference type="EC" id="2.4.1.16" evidence="12"/>
<dbReference type="EMBL" id="CM001197">
    <property type="protein sequence ID" value="EGP90005.1"/>
    <property type="molecule type" value="Genomic_DNA"/>
</dbReference>
<dbReference type="SMR" id="F9X2Z5"/>
<dbReference type="STRING" id="336722.F9X2Z5"/>
<dbReference type="EnsemblFungi" id="Mycgr3T108152">
    <property type="protein sequence ID" value="Mycgr3P108152"/>
    <property type="gene ID" value="Mycgr3G108152"/>
</dbReference>
<dbReference type="KEGG" id="ztr:MYCGRDRAFT_108152"/>
<dbReference type="VEuPathDB" id="FungiDB:ZTRI_2.767"/>
<dbReference type="eggNOG" id="KOG2571">
    <property type="taxonomic scope" value="Eukaryota"/>
</dbReference>
<dbReference type="eggNOG" id="KOG4229">
    <property type="taxonomic scope" value="Eukaryota"/>
</dbReference>
<dbReference type="HOGENOM" id="CLU_000192_0_2_1"/>
<dbReference type="InParanoid" id="F9X2Z5"/>
<dbReference type="OMA" id="LEMHHQI"/>
<dbReference type="OrthoDB" id="370884at2759"/>
<dbReference type="Proteomes" id="UP000008062">
    <property type="component" value="Chromosome 2"/>
</dbReference>
<dbReference type="GO" id="GO:0016324">
    <property type="term" value="C:apical plasma membrane"/>
    <property type="evidence" value="ECO:0007669"/>
    <property type="project" value="UniProtKB-SubCell"/>
</dbReference>
<dbReference type="GO" id="GO:0030428">
    <property type="term" value="C:cell septum"/>
    <property type="evidence" value="ECO:0007669"/>
    <property type="project" value="UniProtKB-SubCell"/>
</dbReference>
<dbReference type="GO" id="GO:0051286">
    <property type="term" value="C:cell tip"/>
    <property type="evidence" value="ECO:0007669"/>
    <property type="project" value="UniProtKB-SubCell"/>
</dbReference>
<dbReference type="GO" id="GO:0016459">
    <property type="term" value="C:myosin complex"/>
    <property type="evidence" value="ECO:0007669"/>
    <property type="project" value="UniProtKB-KW"/>
</dbReference>
<dbReference type="GO" id="GO:0003779">
    <property type="term" value="F:actin binding"/>
    <property type="evidence" value="ECO:0007669"/>
    <property type="project" value="UniProtKB-KW"/>
</dbReference>
<dbReference type="GO" id="GO:0005524">
    <property type="term" value="F:ATP binding"/>
    <property type="evidence" value="ECO:0007669"/>
    <property type="project" value="UniProtKB-KW"/>
</dbReference>
<dbReference type="GO" id="GO:0004100">
    <property type="term" value="F:chitin synthase activity"/>
    <property type="evidence" value="ECO:0007669"/>
    <property type="project" value="UniProtKB-EC"/>
</dbReference>
<dbReference type="GO" id="GO:0003774">
    <property type="term" value="F:cytoskeletal motor activity"/>
    <property type="evidence" value="ECO:0007669"/>
    <property type="project" value="InterPro"/>
</dbReference>
<dbReference type="GO" id="GO:0006031">
    <property type="term" value="P:chitin biosynthetic process"/>
    <property type="evidence" value="ECO:0007669"/>
    <property type="project" value="TreeGrafter"/>
</dbReference>
<dbReference type="GO" id="GO:0031505">
    <property type="term" value="P:fungal-type cell wall organization"/>
    <property type="evidence" value="ECO:0007669"/>
    <property type="project" value="TreeGrafter"/>
</dbReference>
<dbReference type="CDD" id="cd14879">
    <property type="entry name" value="MYSc_Myo17"/>
    <property type="match status" value="1"/>
</dbReference>
<dbReference type="FunFam" id="1.10.10.820:FF:000012">
    <property type="entry name" value="Chitin synthase ChsE"/>
    <property type="match status" value="1"/>
</dbReference>
<dbReference type="FunFam" id="1.20.58.530:FF:000017">
    <property type="entry name" value="Chitin synthase ChsE"/>
    <property type="match status" value="1"/>
</dbReference>
<dbReference type="FunFam" id="3.10.120.10:FF:000019">
    <property type="entry name" value="Chitin synthase ChsE"/>
    <property type="match status" value="1"/>
</dbReference>
<dbReference type="FunFam" id="3.40.850.10:FF:000055">
    <property type="entry name" value="Chitin synthase ChsE"/>
    <property type="match status" value="1"/>
</dbReference>
<dbReference type="Gene3D" id="1.10.10.820">
    <property type="match status" value="1"/>
</dbReference>
<dbReference type="Gene3D" id="1.20.58.530">
    <property type="match status" value="2"/>
</dbReference>
<dbReference type="Gene3D" id="3.10.120.10">
    <property type="entry name" value="Cytochrome b5-like heme/steroid binding domain"/>
    <property type="match status" value="1"/>
</dbReference>
<dbReference type="Gene3D" id="1.10.10.60">
    <property type="entry name" value="Homeodomain-like"/>
    <property type="match status" value="1"/>
</dbReference>
<dbReference type="Gene3D" id="3.40.850.10">
    <property type="entry name" value="Kinesin motor domain"/>
    <property type="match status" value="2"/>
</dbReference>
<dbReference type="Gene3D" id="1.20.120.720">
    <property type="entry name" value="Myosin VI head, motor domain, U50 subdomain"/>
    <property type="match status" value="2"/>
</dbReference>
<dbReference type="Gene3D" id="3.90.550.10">
    <property type="entry name" value="Spore Coat Polysaccharide Biosynthesis Protein SpsA, Chain A"/>
    <property type="match status" value="1"/>
</dbReference>
<dbReference type="InterPro" id="IPR004835">
    <property type="entry name" value="Chitin_synth"/>
</dbReference>
<dbReference type="InterPro" id="IPR001199">
    <property type="entry name" value="Cyt_B5-like_heme/steroid-bd"/>
</dbReference>
<dbReference type="InterPro" id="IPR036400">
    <property type="entry name" value="Cyt_B5-like_heme/steroid_sf"/>
</dbReference>
<dbReference type="InterPro" id="IPR014876">
    <property type="entry name" value="DEK_C"/>
</dbReference>
<dbReference type="InterPro" id="IPR036961">
    <property type="entry name" value="Kinesin_motor_dom_sf"/>
</dbReference>
<dbReference type="InterPro" id="IPR001609">
    <property type="entry name" value="Myosin_head_motor_dom-like"/>
</dbReference>
<dbReference type="InterPro" id="IPR036037">
    <property type="entry name" value="MYSc_Myo17"/>
</dbReference>
<dbReference type="InterPro" id="IPR029044">
    <property type="entry name" value="Nucleotide-diphossugar_trans"/>
</dbReference>
<dbReference type="InterPro" id="IPR027417">
    <property type="entry name" value="P-loop_NTPase"/>
</dbReference>
<dbReference type="PANTHER" id="PTHR22914">
    <property type="entry name" value="CHITIN SYNTHASE"/>
    <property type="match status" value="1"/>
</dbReference>
<dbReference type="PANTHER" id="PTHR22914:SF45">
    <property type="entry name" value="CHITIN SYNTHASE"/>
    <property type="match status" value="1"/>
</dbReference>
<dbReference type="Pfam" id="PF03142">
    <property type="entry name" value="Chitin_synth_2"/>
    <property type="match status" value="1"/>
</dbReference>
<dbReference type="Pfam" id="PF00173">
    <property type="entry name" value="Cyt-b5"/>
    <property type="match status" value="1"/>
</dbReference>
<dbReference type="Pfam" id="PF08766">
    <property type="entry name" value="DEK_C"/>
    <property type="match status" value="1"/>
</dbReference>
<dbReference type="Pfam" id="PF00063">
    <property type="entry name" value="Myosin_head"/>
    <property type="match status" value="1"/>
</dbReference>
<dbReference type="SMART" id="SM01117">
    <property type="entry name" value="Cyt-b5"/>
    <property type="match status" value="2"/>
</dbReference>
<dbReference type="SMART" id="SM00242">
    <property type="entry name" value="MYSc"/>
    <property type="match status" value="1"/>
</dbReference>
<dbReference type="SUPFAM" id="SSF55856">
    <property type="entry name" value="Cytochrome b5-like heme/steroid binding domain"/>
    <property type="match status" value="1"/>
</dbReference>
<dbReference type="SUPFAM" id="SSF109715">
    <property type="entry name" value="DEK C-terminal domain"/>
    <property type="match status" value="1"/>
</dbReference>
<dbReference type="SUPFAM" id="SSF53448">
    <property type="entry name" value="Nucleotide-diphospho-sugar transferases"/>
    <property type="match status" value="1"/>
</dbReference>
<dbReference type="SUPFAM" id="SSF52540">
    <property type="entry name" value="P-loop containing nucleoside triphosphate hydrolases"/>
    <property type="match status" value="1"/>
</dbReference>
<dbReference type="PROSITE" id="PS50255">
    <property type="entry name" value="CYTOCHROME_B5_2"/>
    <property type="match status" value="1"/>
</dbReference>
<dbReference type="PROSITE" id="PS51998">
    <property type="entry name" value="DEK_C"/>
    <property type="match status" value="1"/>
</dbReference>
<dbReference type="PROSITE" id="PS51456">
    <property type="entry name" value="MYOSIN_MOTOR"/>
    <property type="match status" value="1"/>
</dbReference>
<reference key="1">
    <citation type="journal article" date="2011" name="PLoS Genet.">
        <title>Finished genome of the fungal wheat pathogen Mycosphaerella graminicola reveals dispensome structure, chromosome plasticity, and stealth pathogenesis.</title>
        <authorList>
            <person name="Goodwin S.B."/>
            <person name="Ben M'barek S."/>
            <person name="Dhillon B."/>
            <person name="Wittenberg A.H.J."/>
            <person name="Crane C.F."/>
            <person name="Hane J.K."/>
            <person name="Foster A.J."/>
            <person name="Van der Lee T.A.J."/>
            <person name="Grimwood J."/>
            <person name="Aerts A."/>
            <person name="Antoniw J."/>
            <person name="Bailey A."/>
            <person name="Bluhm B."/>
            <person name="Bowler J."/>
            <person name="Bristow J."/>
            <person name="van der Burgt A."/>
            <person name="Canto-Canche B."/>
            <person name="Churchill A.C.L."/>
            <person name="Conde-Ferraez L."/>
            <person name="Cools H.J."/>
            <person name="Coutinho P.M."/>
            <person name="Csukai M."/>
            <person name="Dehal P."/>
            <person name="De Wit P."/>
            <person name="Donzelli B."/>
            <person name="van de Geest H.C."/>
            <person name="van Ham R.C.H.J."/>
            <person name="Hammond-Kosack K.E."/>
            <person name="Henrissat B."/>
            <person name="Kilian A."/>
            <person name="Kobayashi A.K."/>
            <person name="Koopmann E."/>
            <person name="Kourmpetis Y."/>
            <person name="Kuzniar A."/>
            <person name="Lindquist E."/>
            <person name="Lombard V."/>
            <person name="Maliepaard C."/>
            <person name="Martins N."/>
            <person name="Mehrabi R."/>
            <person name="Nap J.P.H."/>
            <person name="Ponomarenko A."/>
            <person name="Rudd J.J."/>
            <person name="Salamov A."/>
            <person name="Schmutz J."/>
            <person name="Schouten H.J."/>
            <person name="Shapiro H."/>
            <person name="Stergiopoulos I."/>
            <person name="Torriani S.F.F."/>
            <person name="Tu H."/>
            <person name="de Vries R.P."/>
            <person name="Waalwijk C."/>
            <person name="Ware S.B."/>
            <person name="Wiebenga A."/>
            <person name="Zwiers L.-H."/>
            <person name="Oliver R.P."/>
            <person name="Grigoriev I.V."/>
            <person name="Kema G.H.J."/>
        </authorList>
    </citation>
    <scope>NUCLEOTIDE SEQUENCE [LARGE SCALE GENOMIC DNA]</scope>
    <source>
        <strain>CBS 115943 / IPO323</strain>
    </source>
</reference>
<reference key="2">
    <citation type="journal article" date="2015" name="Fungal Genet. Biol.">
        <title>Libraries for two-hybrid screening of yeast and hyphal growth forms in Zymoseptoria tritici.</title>
        <authorList>
            <person name="Ma W."/>
            <person name="Kilaru S."/>
            <person name="Collins C."/>
            <person name="Courbot M."/>
            <person name="Steinberg G."/>
        </authorList>
    </citation>
    <scope>IDENTIFICATION</scope>
</reference>
<reference key="3">
    <citation type="journal article" date="2020" name="Fungal Genet. Biol.">
        <title>Class V chitin synthase and beta(1,3)-glucan synthase co-travel in the same vesicle in Zymoseptoria tritici.</title>
        <authorList>
            <person name="Schuster M."/>
            <person name="Guiu-Aragones C."/>
            <person name="Steinberg G."/>
        </authorList>
    </citation>
    <scope>FUNCTION</scope>
    <scope>SUBCELLULAR LOCATION</scope>
</reference>
<gene>
    <name evidence="10" type="primary">CHS5</name>
    <name evidence="9" type="synonym">mcs1</name>
    <name type="ORF">MYCGRDRAFT_108152</name>
</gene>
<keyword id="KW-0009">Actin-binding</keyword>
<keyword id="KW-0067">ATP-binding</keyword>
<keyword id="KW-1003">Cell membrane</keyword>
<keyword id="KW-0325">Glycoprotein</keyword>
<keyword id="KW-0328">Glycosyltransferase</keyword>
<keyword id="KW-0472">Membrane</keyword>
<keyword id="KW-0505">Motor protein</keyword>
<keyword id="KW-0518">Myosin</keyword>
<keyword id="KW-0547">Nucleotide-binding</keyword>
<keyword id="KW-1185">Reference proteome</keyword>
<keyword id="KW-0808">Transferase</keyword>
<keyword id="KW-0812">Transmembrane</keyword>
<keyword id="KW-1133">Transmembrane helix</keyword>
<evidence type="ECO:0000250" key="1">
    <source>
        <dbReference type="UniProtKB" id="G5EB74"/>
    </source>
</evidence>
<evidence type="ECO:0000255" key="2"/>
<evidence type="ECO:0000255" key="3">
    <source>
        <dbReference type="PROSITE-ProRule" id="PRU00279"/>
    </source>
</evidence>
<evidence type="ECO:0000255" key="4">
    <source>
        <dbReference type="PROSITE-ProRule" id="PRU00498"/>
    </source>
</evidence>
<evidence type="ECO:0000255" key="5">
    <source>
        <dbReference type="PROSITE-ProRule" id="PRU00782"/>
    </source>
</evidence>
<evidence type="ECO:0000255" key="6">
    <source>
        <dbReference type="PROSITE-ProRule" id="PRU01342"/>
    </source>
</evidence>
<evidence type="ECO:0000256" key="7">
    <source>
        <dbReference type="SAM" id="MobiDB-lite"/>
    </source>
</evidence>
<evidence type="ECO:0000269" key="8">
    <source>
    </source>
</evidence>
<evidence type="ECO:0000303" key="9">
    <source>
    </source>
</evidence>
<evidence type="ECO:0000303" key="10">
    <source>
    </source>
</evidence>
<evidence type="ECO:0000305" key="11"/>
<evidence type="ECO:0000305" key="12">
    <source>
    </source>
</evidence>